<sequence length="428" mass="45238">MSIIAITVFVAGYALIASDRVSKTRVALTCAAIMVGAGIVGSDDVFYSHEAGIDWDVIFLLLGMMIIVSVLRHTGVFEYVAIWAVKRANAAPLRIMILLVLVTALGSALLDNVTTVLLIAPVTLLVCDRLGVNSTPFLVAEVFASNVGGAATLVGDPPNIIIASRAGLTFNDFLIHMAPAVLVVMIALIGLLPWLLGSVTAEPDRVADVLSLNEREAIHDRGLLIKCGVVLVLVFAAFIAHPVLHIQPSLVALLGAGVLVRFSGLERSDYLSSVEWDTLLFFAGLFVMVGALVKTGVVEQLARAATELTGGNELLTVGLILGISAPVSGIIDNIPYVATMTPIVTELVAAMPGHVHPDTFWWALALSADFGGNLTAVAASANVVMLGIARRSGTPISFWKFTRKGAVVTAVSLVLSAVYLWLRYFVFG</sequence>
<feature type="chain" id="PRO_0000172515" description="Uncharacterized transporter Rv2685">
    <location>
        <begin position="1"/>
        <end position="428"/>
    </location>
</feature>
<feature type="transmembrane region" description="Helical" evidence="1">
    <location>
        <begin position="26"/>
        <end position="46"/>
    </location>
</feature>
<feature type="transmembrane region" description="Helical" evidence="1">
    <location>
        <begin position="51"/>
        <end position="71"/>
    </location>
</feature>
<feature type="transmembrane region" description="Helical" evidence="1">
    <location>
        <begin position="90"/>
        <end position="110"/>
    </location>
</feature>
<feature type="transmembrane region" description="Helical" evidence="1">
    <location>
        <begin position="135"/>
        <end position="155"/>
    </location>
</feature>
<feature type="transmembrane region" description="Helical" evidence="1">
    <location>
        <begin position="177"/>
        <end position="197"/>
    </location>
</feature>
<feature type="transmembrane region" description="Helical" evidence="1">
    <location>
        <begin position="223"/>
        <end position="243"/>
    </location>
</feature>
<feature type="transmembrane region" description="Helical" evidence="1">
    <location>
        <begin position="278"/>
        <end position="298"/>
    </location>
</feature>
<feature type="transmembrane region" description="Helical" evidence="1">
    <location>
        <begin position="314"/>
        <end position="334"/>
    </location>
</feature>
<feature type="transmembrane region" description="Helical" evidence="1">
    <location>
        <begin position="359"/>
        <end position="379"/>
    </location>
</feature>
<feature type="transmembrane region" description="Helical" evidence="1">
    <location>
        <begin position="407"/>
        <end position="427"/>
    </location>
</feature>
<organism>
    <name type="scientific">Mycobacterium tuberculosis (strain ATCC 25618 / H37Rv)</name>
    <dbReference type="NCBI Taxonomy" id="83332"/>
    <lineage>
        <taxon>Bacteria</taxon>
        <taxon>Bacillati</taxon>
        <taxon>Actinomycetota</taxon>
        <taxon>Actinomycetes</taxon>
        <taxon>Mycobacteriales</taxon>
        <taxon>Mycobacteriaceae</taxon>
        <taxon>Mycobacterium</taxon>
        <taxon>Mycobacterium tuberculosis complex</taxon>
    </lineage>
</organism>
<gene>
    <name type="ordered locus">Rv2685</name>
    <name type="ORF">MTCY05A6.06</name>
</gene>
<dbReference type="EMBL" id="AL123456">
    <property type="protein sequence ID" value="CCP45483.1"/>
    <property type="molecule type" value="Genomic_DNA"/>
</dbReference>
<dbReference type="PIR" id="H70528">
    <property type="entry name" value="H70528"/>
</dbReference>
<dbReference type="RefSeq" id="WP_003899431.1">
    <property type="nucleotide sequence ID" value="NZ_NVQJ01000017.1"/>
</dbReference>
<dbReference type="SMR" id="P9WPD7"/>
<dbReference type="FunCoup" id="P9WPD7">
    <property type="interactions" value="14"/>
</dbReference>
<dbReference type="STRING" id="83332.Rv2685"/>
<dbReference type="PaxDb" id="83332-Rv2685"/>
<dbReference type="DNASU" id="888150"/>
<dbReference type="KEGG" id="mtu:Rv2685"/>
<dbReference type="KEGG" id="mtv:RVBD_2685"/>
<dbReference type="TubercuList" id="Rv2685"/>
<dbReference type="eggNOG" id="COG1055">
    <property type="taxonomic scope" value="Bacteria"/>
</dbReference>
<dbReference type="InParanoid" id="P9WPD7"/>
<dbReference type="OrthoDB" id="9809303at2"/>
<dbReference type="PhylomeDB" id="P9WPD7"/>
<dbReference type="Proteomes" id="UP000001584">
    <property type="component" value="Chromosome"/>
</dbReference>
<dbReference type="GO" id="GO:0005886">
    <property type="term" value="C:plasma membrane"/>
    <property type="evidence" value="ECO:0007669"/>
    <property type="project" value="UniProtKB-SubCell"/>
</dbReference>
<dbReference type="GO" id="GO:0015105">
    <property type="term" value="F:arsenite transmembrane transporter activity"/>
    <property type="evidence" value="ECO:0007669"/>
    <property type="project" value="InterPro"/>
</dbReference>
<dbReference type="CDD" id="cd01116">
    <property type="entry name" value="P_permease"/>
    <property type="match status" value="1"/>
</dbReference>
<dbReference type="InterPro" id="IPR000802">
    <property type="entry name" value="Arsenical_pump_ArsB"/>
</dbReference>
<dbReference type="InterPro" id="IPR004680">
    <property type="entry name" value="Cit_transptr-like_dom"/>
</dbReference>
<dbReference type="InterPro" id="IPR051475">
    <property type="entry name" value="Diverse_Ion_Transporter"/>
</dbReference>
<dbReference type="PANTHER" id="PTHR43568">
    <property type="entry name" value="P PROTEIN"/>
    <property type="match status" value="1"/>
</dbReference>
<dbReference type="PANTHER" id="PTHR43568:SF1">
    <property type="entry name" value="P PROTEIN"/>
    <property type="match status" value="1"/>
</dbReference>
<dbReference type="Pfam" id="PF03600">
    <property type="entry name" value="CitMHS"/>
    <property type="match status" value="1"/>
</dbReference>
<dbReference type="PRINTS" id="PR00758">
    <property type="entry name" value="ARSENICPUMP"/>
</dbReference>
<keyword id="KW-1003">Cell membrane</keyword>
<keyword id="KW-0472">Membrane</keyword>
<keyword id="KW-1185">Reference proteome</keyword>
<keyword id="KW-0812">Transmembrane</keyword>
<keyword id="KW-1133">Transmembrane helix</keyword>
<keyword id="KW-0813">Transport</keyword>
<comment type="subcellular location">
    <subcellularLocation>
        <location evidence="2">Cell membrane</location>
        <topology evidence="2">Multi-pass membrane protein</topology>
    </subcellularLocation>
</comment>
<comment type="similarity">
    <text evidence="2">Belongs to the CitM (TC 2.A.11) transporter family.</text>
</comment>
<reference key="1">
    <citation type="journal article" date="1998" name="Nature">
        <title>Deciphering the biology of Mycobacterium tuberculosis from the complete genome sequence.</title>
        <authorList>
            <person name="Cole S.T."/>
            <person name="Brosch R."/>
            <person name="Parkhill J."/>
            <person name="Garnier T."/>
            <person name="Churcher C.M."/>
            <person name="Harris D.E."/>
            <person name="Gordon S.V."/>
            <person name="Eiglmeier K."/>
            <person name="Gas S."/>
            <person name="Barry C.E. III"/>
            <person name="Tekaia F."/>
            <person name="Badcock K."/>
            <person name="Basham D."/>
            <person name="Brown D."/>
            <person name="Chillingworth T."/>
            <person name="Connor R."/>
            <person name="Davies R.M."/>
            <person name="Devlin K."/>
            <person name="Feltwell T."/>
            <person name="Gentles S."/>
            <person name="Hamlin N."/>
            <person name="Holroyd S."/>
            <person name="Hornsby T."/>
            <person name="Jagels K."/>
            <person name="Krogh A."/>
            <person name="McLean J."/>
            <person name="Moule S."/>
            <person name="Murphy L.D."/>
            <person name="Oliver S."/>
            <person name="Osborne J."/>
            <person name="Quail M.A."/>
            <person name="Rajandream M.A."/>
            <person name="Rogers J."/>
            <person name="Rutter S."/>
            <person name="Seeger K."/>
            <person name="Skelton S."/>
            <person name="Squares S."/>
            <person name="Squares R."/>
            <person name="Sulston J.E."/>
            <person name="Taylor K."/>
            <person name="Whitehead S."/>
            <person name="Barrell B.G."/>
        </authorList>
    </citation>
    <scope>NUCLEOTIDE SEQUENCE [LARGE SCALE GENOMIC DNA]</scope>
    <source>
        <strain>ATCC 25618 / H37Rv</strain>
    </source>
</reference>
<reference key="2">
    <citation type="journal article" date="2011" name="Mol. Cell. Proteomics">
        <title>Proteogenomic analysis of Mycobacterium tuberculosis by high resolution mass spectrometry.</title>
        <authorList>
            <person name="Kelkar D.S."/>
            <person name="Kumar D."/>
            <person name="Kumar P."/>
            <person name="Balakrishnan L."/>
            <person name="Muthusamy B."/>
            <person name="Yadav A.K."/>
            <person name="Shrivastava P."/>
            <person name="Marimuthu A."/>
            <person name="Anand S."/>
            <person name="Sundaram H."/>
            <person name="Kingsbury R."/>
            <person name="Harsha H.C."/>
            <person name="Nair B."/>
            <person name="Prasad T.S."/>
            <person name="Chauhan D.S."/>
            <person name="Katoch K."/>
            <person name="Katoch V.M."/>
            <person name="Kumar P."/>
            <person name="Chaerkady R."/>
            <person name="Ramachandran S."/>
            <person name="Dash D."/>
            <person name="Pandey A."/>
        </authorList>
    </citation>
    <scope>IDENTIFICATION BY MASS SPECTROMETRY [LARGE SCALE ANALYSIS]</scope>
    <source>
        <strain>ATCC 25618 / H37Rv</strain>
    </source>
</reference>
<evidence type="ECO:0000255" key="1"/>
<evidence type="ECO:0000305" key="2"/>
<protein>
    <recommendedName>
        <fullName>Uncharacterized transporter Rv2685</fullName>
    </recommendedName>
</protein>
<accession>P9WPD7</accession>
<accession>L0TD23</accession>
<accession>O07187</accession>
<name>Y2685_MYCTU</name>
<proteinExistence type="evidence at protein level"/>